<comment type="function">
    <text evidence="1">Catalyzes the formation of S-adenosylmethionine (AdoMet) from methionine and ATP. The overall synthetic reaction is composed of two sequential steps, AdoMet formation and the subsequent tripolyphosphate hydrolysis which occurs prior to release of AdoMet from the enzyme.</text>
</comment>
<comment type="catalytic activity">
    <reaction evidence="1">
        <text>L-methionine + ATP + H2O = S-adenosyl-L-methionine + phosphate + diphosphate</text>
        <dbReference type="Rhea" id="RHEA:21080"/>
        <dbReference type="ChEBI" id="CHEBI:15377"/>
        <dbReference type="ChEBI" id="CHEBI:30616"/>
        <dbReference type="ChEBI" id="CHEBI:33019"/>
        <dbReference type="ChEBI" id="CHEBI:43474"/>
        <dbReference type="ChEBI" id="CHEBI:57844"/>
        <dbReference type="ChEBI" id="CHEBI:59789"/>
        <dbReference type="EC" id="2.5.1.6"/>
    </reaction>
</comment>
<comment type="cofactor">
    <cofactor evidence="1">
        <name>Mg(2+)</name>
        <dbReference type="ChEBI" id="CHEBI:18420"/>
    </cofactor>
    <text evidence="1">Binds 2 divalent ions per subunit.</text>
</comment>
<comment type="cofactor">
    <cofactor evidence="1">
        <name>K(+)</name>
        <dbReference type="ChEBI" id="CHEBI:29103"/>
    </cofactor>
    <text evidence="1">Binds 1 potassium ion per subunit.</text>
</comment>
<comment type="pathway">
    <text evidence="1">Amino-acid biosynthesis; S-adenosyl-L-methionine biosynthesis; S-adenosyl-L-methionine from L-methionine: step 1/1.</text>
</comment>
<comment type="subunit">
    <text evidence="1">Homotetramer; dimer of dimers.</text>
</comment>
<comment type="subcellular location">
    <subcellularLocation>
        <location evidence="1">Cytoplasm</location>
    </subcellularLocation>
</comment>
<comment type="similarity">
    <text evidence="1">Belongs to the AdoMet synthase family.</text>
</comment>
<sequence length="387" mass="41911">MSDYLFTSESVGEGHPDKVADQISDAILDAILAQDKHSRVAAETLCNTGLVVLAGEITTNANVDYIQVARDTIKRIGYDNTEYGIDYKGCAVLVAYDKQSPDIAQGVNAAYDDNLGQGAGDQGLMFGYACDETPSLMPLPIYLSHRMVERQAMLRKDGRLPWARPDAKSQVTIRYVDGKPHSIDTVVLSTQHSPDISLEDLREATIEQIIKPVLPKELIKGDIKYLVNPTGRFVVGGPQGDCGLTGRKIIVDTYGGAAPHGGGAFSGKDPSKVDRSAAYATRYVAKNIVAAGLASRCLVQVSYAIGVAEPTSIMVETYGTGKVSNETLTALVRKHFDLRPKGIVNMLDLLRPIYQKTAAYGHFGRDEPEFTWEATDRANLLKSDAGL</sequence>
<dbReference type="EC" id="2.5.1.6" evidence="1"/>
<dbReference type="EMBL" id="CP000089">
    <property type="protein sequence ID" value="AAZ44947.1"/>
    <property type="molecule type" value="Genomic_DNA"/>
</dbReference>
<dbReference type="SMR" id="Q47JN4"/>
<dbReference type="STRING" id="159087.Daro_0188"/>
<dbReference type="KEGG" id="dar:Daro_0188"/>
<dbReference type="eggNOG" id="COG0192">
    <property type="taxonomic scope" value="Bacteria"/>
</dbReference>
<dbReference type="HOGENOM" id="CLU_041802_1_1_4"/>
<dbReference type="OrthoDB" id="9801686at2"/>
<dbReference type="UniPathway" id="UPA00315">
    <property type="reaction ID" value="UER00080"/>
</dbReference>
<dbReference type="GO" id="GO:0005737">
    <property type="term" value="C:cytoplasm"/>
    <property type="evidence" value="ECO:0007669"/>
    <property type="project" value="UniProtKB-SubCell"/>
</dbReference>
<dbReference type="GO" id="GO:0005524">
    <property type="term" value="F:ATP binding"/>
    <property type="evidence" value="ECO:0007669"/>
    <property type="project" value="UniProtKB-UniRule"/>
</dbReference>
<dbReference type="GO" id="GO:0000287">
    <property type="term" value="F:magnesium ion binding"/>
    <property type="evidence" value="ECO:0007669"/>
    <property type="project" value="UniProtKB-UniRule"/>
</dbReference>
<dbReference type="GO" id="GO:0004478">
    <property type="term" value="F:methionine adenosyltransferase activity"/>
    <property type="evidence" value="ECO:0007669"/>
    <property type="project" value="UniProtKB-UniRule"/>
</dbReference>
<dbReference type="GO" id="GO:0006730">
    <property type="term" value="P:one-carbon metabolic process"/>
    <property type="evidence" value="ECO:0007669"/>
    <property type="project" value="UniProtKB-KW"/>
</dbReference>
<dbReference type="GO" id="GO:0006556">
    <property type="term" value="P:S-adenosylmethionine biosynthetic process"/>
    <property type="evidence" value="ECO:0007669"/>
    <property type="project" value="UniProtKB-UniRule"/>
</dbReference>
<dbReference type="CDD" id="cd18079">
    <property type="entry name" value="S-AdoMet_synt"/>
    <property type="match status" value="1"/>
</dbReference>
<dbReference type="FunFam" id="3.30.300.10:FF:000003">
    <property type="entry name" value="S-adenosylmethionine synthase"/>
    <property type="match status" value="1"/>
</dbReference>
<dbReference type="FunFam" id="3.30.300.10:FF:000004">
    <property type="entry name" value="S-adenosylmethionine synthase"/>
    <property type="match status" value="1"/>
</dbReference>
<dbReference type="Gene3D" id="3.30.300.10">
    <property type="match status" value="3"/>
</dbReference>
<dbReference type="HAMAP" id="MF_00086">
    <property type="entry name" value="S_AdoMet_synth1"/>
    <property type="match status" value="1"/>
</dbReference>
<dbReference type="InterPro" id="IPR022631">
    <property type="entry name" value="ADOMET_SYNTHASE_CS"/>
</dbReference>
<dbReference type="InterPro" id="IPR022630">
    <property type="entry name" value="S-AdoMet_synt_C"/>
</dbReference>
<dbReference type="InterPro" id="IPR022629">
    <property type="entry name" value="S-AdoMet_synt_central"/>
</dbReference>
<dbReference type="InterPro" id="IPR022628">
    <property type="entry name" value="S-AdoMet_synt_N"/>
</dbReference>
<dbReference type="InterPro" id="IPR002133">
    <property type="entry name" value="S-AdoMet_synthetase"/>
</dbReference>
<dbReference type="InterPro" id="IPR022636">
    <property type="entry name" value="S-AdoMet_synthetase_sfam"/>
</dbReference>
<dbReference type="NCBIfam" id="TIGR01034">
    <property type="entry name" value="metK"/>
    <property type="match status" value="1"/>
</dbReference>
<dbReference type="PANTHER" id="PTHR11964">
    <property type="entry name" value="S-ADENOSYLMETHIONINE SYNTHETASE"/>
    <property type="match status" value="1"/>
</dbReference>
<dbReference type="Pfam" id="PF02773">
    <property type="entry name" value="S-AdoMet_synt_C"/>
    <property type="match status" value="1"/>
</dbReference>
<dbReference type="Pfam" id="PF02772">
    <property type="entry name" value="S-AdoMet_synt_M"/>
    <property type="match status" value="1"/>
</dbReference>
<dbReference type="Pfam" id="PF00438">
    <property type="entry name" value="S-AdoMet_synt_N"/>
    <property type="match status" value="1"/>
</dbReference>
<dbReference type="PIRSF" id="PIRSF000497">
    <property type="entry name" value="MAT"/>
    <property type="match status" value="1"/>
</dbReference>
<dbReference type="SUPFAM" id="SSF55973">
    <property type="entry name" value="S-adenosylmethionine synthetase"/>
    <property type="match status" value="3"/>
</dbReference>
<dbReference type="PROSITE" id="PS00376">
    <property type="entry name" value="ADOMET_SYNTHASE_1"/>
    <property type="match status" value="1"/>
</dbReference>
<dbReference type="PROSITE" id="PS00377">
    <property type="entry name" value="ADOMET_SYNTHASE_2"/>
    <property type="match status" value="1"/>
</dbReference>
<reference key="1">
    <citation type="journal article" date="2009" name="BMC Genomics">
        <title>Metabolic analysis of the soil microbe Dechloromonas aromatica str. RCB: indications of a surprisingly complex life-style and cryptic anaerobic pathways for aromatic degradation.</title>
        <authorList>
            <person name="Salinero K.K."/>
            <person name="Keller K."/>
            <person name="Feil W.S."/>
            <person name="Feil H."/>
            <person name="Trong S."/>
            <person name="Di Bartolo G."/>
            <person name="Lapidus A."/>
        </authorList>
    </citation>
    <scope>NUCLEOTIDE SEQUENCE [LARGE SCALE GENOMIC DNA]</scope>
    <source>
        <strain>RCB</strain>
    </source>
</reference>
<proteinExistence type="inferred from homology"/>
<keyword id="KW-0067">ATP-binding</keyword>
<keyword id="KW-0963">Cytoplasm</keyword>
<keyword id="KW-0460">Magnesium</keyword>
<keyword id="KW-0479">Metal-binding</keyword>
<keyword id="KW-0547">Nucleotide-binding</keyword>
<keyword id="KW-0554">One-carbon metabolism</keyword>
<keyword id="KW-0630">Potassium</keyword>
<keyword id="KW-0808">Transferase</keyword>
<gene>
    <name evidence="1" type="primary">metK</name>
    <name type="ordered locus">Daro_0188</name>
</gene>
<evidence type="ECO:0000255" key="1">
    <source>
        <dbReference type="HAMAP-Rule" id="MF_00086"/>
    </source>
</evidence>
<organism>
    <name type="scientific">Dechloromonas aromatica (strain RCB)</name>
    <dbReference type="NCBI Taxonomy" id="159087"/>
    <lineage>
        <taxon>Bacteria</taxon>
        <taxon>Pseudomonadati</taxon>
        <taxon>Pseudomonadota</taxon>
        <taxon>Betaproteobacteria</taxon>
        <taxon>Rhodocyclales</taxon>
        <taxon>Azonexaceae</taxon>
        <taxon>Dechloromonas</taxon>
    </lineage>
</organism>
<name>METK_DECAR</name>
<protein>
    <recommendedName>
        <fullName evidence="1">S-adenosylmethionine synthase</fullName>
        <shortName evidence="1">AdoMet synthase</shortName>
        <ecNumber evidence="1">2.5.1.6</ecNumber>
    </recommendedName>
    <alternativeName>
        <fullName evidence="1">MAT</fullName>
    </alternativeName>
    <alternativeName>
        <fullName evidence="1">Methionine adenosyltransferase</fullName>
    </alternativeName>
</protein>
<accession>Q47JN4</accession>
<feature type="chain" id="PRO_0000240990" description="S-adenosylmethionine synthase">
    <location>
        <begin position="1"/>
        <end position="387"/>
    </location>
</feature>
<feature type="region of interest" description="Flexible loop" evidence="1">
    <location>
        <begin position="99"/>
        <end position="109"/>
    </location>
</feature>
<feature type="binding site" description="in other chain" evidence="1">
    <location>
        <position position="15"/>
    </location>
    <ligand>
        <name>ATP</name>
        <dbReference type="ChEBI" id="CHEBI:30616"/>
        <note>ligand shared between two neighboring subunits</note>
    </ligand>
</feature>
<feature type="binding site" evidence="1">
    <location>
        <position position="17"/>
    </location>
    <ligand>
        <name>Mg(2+)</name>
        <dbReference type="ChEBI" id="CHEBI:18420"/>
    </ligand>
</feature>
<feature type="binding site" evidence="1">
    <location>
        <position position="43"/>
    </location>
    <ligand>
        <name>K(+)</name>
        <dbReference type="ChEBI" id="CHEBI:29103"/>
    </ligand>
</feature>
<feature type="binding site" description="in other chain" evidence="1">
    <location>
        <position position="56"/>
    </location>
    <ligand>
        <name>L-methionine</name>
        <dbReference type="ChEBI" id="CHEBI:57844"/>
        <note>ligand shared between two neighboring subunits</note>
    </ligand>
</feature>
<feature type="binding site" description="in other chain" evidence="1">
    <location>
        <position position="99"/>
    </location>
    <ligand>
        <name>L-methionine</name>
        <dbReference type="ChEBI" id="CHEBI:57844"/>
        <note>ligand shared between two neighboring subunits</note>
    </ligand>
</feature>
<feature type="binding site" description="in other chain" evidence="1">
    <location>
        <begin position="166"/>
        <end position="168"/>
    </location>
    <ligand>
        <name>ATP</name>
        <dbReference type="ChEBI" id="CHEBI:30616"/>
        <note>ligand shared between two neighboring subunits</note>
    </ligand>
</feature>
<feature type="binding site" description="in other chain" evidence="1">
    <location>
        <begin position="232"/>
        <end position="233"/>
    </location>
    <ligand>
        <name>ATP</name>
        <dbReference type="ChEBI" id="CHEBI:30616"/>
        <note>ligand shared between two neighboring subunits</note>
    </ligand>
</feature>
<feature type="binding site" evidence="1">
    <location>
        <position position="241"/>
    </location>
    <ligand>
        <name>ATP</name>
        <dbReference type="ChEBI" id="CHEBI:30616"/>
        <note>ligand shared between two neighboring subunits</note>
    </ligand>
</feature>
<feature type="binding site" evidence="1">
    <location>
        <position position="241"/>
    </location>
    <ligand>
        <name>L-methionine</name>
        <dbReference type="ChEBI" id="CHEBI:57844"/>
        <note>ligand shared between two neighboring subunits</note>
    </ligand>
</feature>
<feature type="binding site" description="in other chain" evidence="1">
    <location>
        <begin position="247"/>
        <end position="248"/>
    </location>
    <ligand>
        <name>ATP</name>
        <dbReference type="ChEBI" id="CHEBI:30616"/>
        <note>ligand shared between two neighboring subunits</note>
    </ligand>
</feature>
<feature type="binding site" evidence="1">
    <location>
        <position position="264"/>
    </location>
    <ligand>
        <name>ATP</name>
        <dbReference type="ChEBI" id="CHEBI:30616"/>
        <note>ligand shared between two neighboring subunits</note>
    </ligand>
</feature>
<feature type="binding site" evidence="1">
    <location>
        <position position="268"/>
    </location>
    <ligand>
        <name>ATP</name>
        <dbReference type="ChEBI" id="CHEBI:30616"/>
        <note>ligand shared between two neighboring subunits</note>
    </ligand>
</feature>
<feature type="binding site" description="in other chain" evidence="1">
    <location>
        <position position="272"/>
    </location>
    <ligand>
        <name>L-methionine</name>
        <dbReference type="ChEBI" id="CHEBI:57844"/>
        <note>ligand shared between two neighboring subunits</note>
    </ligand>
</feature>